<feature type="chain" id="PRO_1000064247" description="Protein TsgA">
    <location>
        <begin position="1"/>
        <end position="393"/>
    </location>
</feature>
<feature type="transmembrane region" description="Helical" evidence="1">
    <location>
        <begin position="11"/>
        <end position="31"/>
    </location>
</feature>
<feature type="transmembrane region" description="Helical" evidence="1">
    <location>
        <begin position="51"/>
        <end position="71"/>
    </location>
</feature>
<feature type="transmembrane region" description="Helical" evidence="1">
    <location>
        <begin position="78"/>
        <end position="98"/>
    </location>
</feature>
<feature type="transmembrane region" description="Helical" evidence="1">
    <location>
        <begin position="101"/>
        <end position="121"/>
    </location>
</feature>
<feature type="transmembrane region" description="Helical" evidence="1">
    <location>
        <begin position="134"/>
        <end position="154"/>
    </location>
</feature>
<feature type="transmembrane region" description="Helical" evidence="1">
    <location>
        <begin position="162"/>
        <end position="182"/>
    </location>
</feature>
<feature type="transmembrane region" description="Helical" evidence="1">
    <location>
        <begin position="206"/>
        <end position="226"/>
    </location>
</feature>
<feature type="transmembrane region" description="Helical" evidence="1">
    <location>
        <begin position="245"/>
        <end position="265"/>
    </location>
</feature>
<feature type="transmembrane region" description="Helical" evidence="1">
    <location>
        <begin position="273"/>
        <end position="293"/>
    </location>
</feature>
<feature type="transmembrane region" description="Helical" evidence="1">
    <location>
        <begin position="297"/>
        <end position="317"/>
    </location>
</feature>
<feature type="transmembrane region" description="Helical" evidence="1">
    <location>
        <begin position="332"/>
        <end position="352"/>
    </location>
</feature>
<feature type="transmembrane region" description="Helical" evidence="1">
    <location>
        <begin position="361"/>
        <end position="381"/>
    </location>
</feature>
<protein>
    <recommendedName>
        <fullName evidence="1">Protein TsgA</fullName>
    </recommendedName>
</protein>
<name>TSGA_ECOK1</name>
<comment type="subcellular location">
    <subcellularLocation>
        <location evidence="1">Cell inner membrane</location>
        <topology evidence="1">Multi-pass membrane protein</topology>
    </subcellularLocation>
</comment>
<comment type="similarity">
    <text evidence="1">Belongs to the major facilitator superfamily. TsgA family.</text>
</comment>
<keyword id="KW-0997">Cell inner membrane</keyword>
<keyword id="KW-1003">Cell membrane</keyword>
<keyword id="KW-0472">Membrane</keyword>
<keyword id="KW-1185">Reference proteome</keyword>
<keyword id="KW-0812">Transmembrane</keyword>
<keyword id="KW-1133">Transmembrane helix</keyword>
<dbReference type="EMBL" id="CP000468">
    <property type="protein sequence ID" value="ABJ02838.1"/>
    <property type="molecule type" value="Genomic_DNA"/>
</dbReference>
<dbReference type="RefSeq" id="WP_000185247.1">
    <property type="nucleotide sequence ID" value="NZ_CADILS010000059.1"/>
</dbReference>
<dbReference type="SMR" id="A1AGP8"/>
<dbReference type="GeneID" id="75206308"/>
<dbReference type="KEGG" id="ecv:APECO1_3092"/>
<dbReference type="HOGENOM" id="CLU_056916_0_0_6"/>
<dbReference type="Proteomes" id="UP000008216">
    <property type="component" value="Chromosome"/>
</dbReference>
<dbReference type="GO" id="GO:0005886">
    <property type="term" value="C:plasma membrane"/>
    <property type="evidence" value="ECO:0007669"/>
    <property type="project" value="UniProtKB-SubCell"/>
</dbReference>
<dbReference type="GO" id="GO:0022857">
    <property type="term" value="F:transmembrane transporter activity"/>
    <property type="evidence" value="ECO:0007669"/>
    <property type="project" value="InterPro"/>
</dbReference>
<dbReference type="CDD" id="cd17333">
    <property type="entry name" value="MFS_FucP_MFSD4_like"/>
    <property type="match status" value="1"/>
</dbReference>
<dbReference type="FunFam" id="1.20.1250.20:FF:000032">
    <property type="entry name" value="Protein TsgA"/>
    <property type="match status" value="1"/>
</dbReference>
<dbReference type="FunFam" id="1.20.1250.20:FF:000052">
    <property type="entry name" value="Protein TsgA"/>
    <property type="match status" value="1"/>
</dbReference>
<dbReference type="Gene3D" id="1.20.1250.20">
    <property type="entry name" value="MFS general substrate transporter like domains"/>
    <property type="match status" value="2"/>
</dbReference>
<dbReference type="HAMAP" id="MF_01044">
    <property type="entry name" value="MFS_TsgA"/>
    <property type="match status" value="1"/>
</dbReference>
<dbReference type="InterPro" id="IPR011701">
    <property type="entry name" value="MFS"/>
</dbReference>
<dbReference type="InterPro" id="IPR020846">
    <property type="entry name" value="MFS_dom"/>
</dbReference>
<dbReference type="InterPro" id="IPR036259">
    <property type="entry name" value="MFS_trans_sf"/>
</dbReference>
<dbReference type="InterPro" id="IPR023528">
    <property type="entry name" value="MFS_TsgA"/>
</dbReference>
<dbReference type="InterPro" id="IPR050375">
    <property type="entry name" value="MFS_TsgA-like"/>
</dbReference>
<dbReference type="NCBIfam" id="NF002982">
    <property type="entry name" value="PRK03699.1"/>
    <property type="match status" value="1"/>
</dbReference>
<dbReference type="PANTHER" id="PTHR43702">
    <property type="entry name" value="L-FUCOSE-PROTON SYMPORTER"/>
    <property type="match status" value="1"/>
</dbReference>
<dbReference type="PANTHER" id="PTHR43702:SF3">
    <property type="entry name" value="PROTEIN TSGA"/>
    <property type="match status" value="1"/>
</dbReference>
<dbReference type="Pfam" id="PF07690">
    <property type="entry name" value="MFS_1"/>
    <property type="match status" value="1"/>
</dbReference>
<dbReference type="SUPFAM" id="SSF103473">
    <property type="entry name" value="MFS general substrate transporter"/>
    <property type="match status" value="1"/>
</dbReference>
<dbReference type="PROSITE" id="PS50850">
    <property type="entry name" value="MFS"/>
    <property type="match status" value="1"/>
</dbReference>
<evidence type="ECO:0000255" key="1">
    <source>
        <dbReference type="HAMAP-Rule" id="MF_01044"/>
    </source>
</evidence>
<sequence>MTNSNRIKLTWISFLSYALTGALVIVTGMVMGNIADYFNLPVSSMSNTFTFLNAGILISIFLNAWLMEIVPLKTQLRFGFLLMVLAVAGLMFSHSLALFSAAMFILGVVSGITMSIGTFLVTQMYEGRQRGSRLLFTDSFFSMAGMIFPMIAAFLLARSIEWYWVYACIGLVYVAIFILTFGCEFPALGKHAPKTDAPVEKEKWGIGVLFLSVAALCYILGQLGFISWVPEYAKGLGMSLNDAGTLVSNFWMSYMVGMWAFSFILRFFDLQRILTVLAGLAAILMYVFNTGTPAHMAWSILALGFFSSAIYTTIITLGSQQTKVPSPKLVNFVLTCGTIGTMLTFVVTGPIVEHSGPQAALLTANGLYAVVFVMCFLLGFVSRHRQHNTLTSH</sequence>
<proteinExistence type="inferred from homology"/>
<gene>
    <name evidence="1" type="primary">tsgA</name>
    <name type="ordered locus">Ecok1_33440</name>
    <name type="ORF">APECO1_3092</name>
</gene>
<organism>
    <name type="scientific">Escherichia coli O1:K1 / APEC</name>
    <dbReference type="NCBI Taxonomy" id="405955"/>
    <lineage>
        <taxon>Bacteria</taxon>
        <taxon>Pseudomonadati</taxon>
        <taxon>Pseudomonadota</taxon>
        <taxon>Gammaproteobacteria</taxon>
        <taxon>Enterobacterales</taxon>
        <taxon>Enterobacteriaceae</taxon>
        <taxon>Escherichia</taxon>
    </lineage>
</organism>
<accession>A1AGP8</accession>
<reference key="1">
    <citation type="journal article" date="2007" name="J. Bacteriol.">
        <title>The genome sequence of avian pathogenic Escherichia coli strain O1:K1:H7 shares strong similarities with human extraintestinal pathogenic E. coli genomes.</title>
        <authorList>
            <person name="Johnson T.J."/>
            <person name="Kariyawasam S."/>
            <person name="Wannemuehler Y."/>
            <person name="Mangiamele P."/>
            <person name="Johnson S.J."/>
            <person name="Doetkott C."/>
            <person name="Skyberg J.A."/>
            <person name="Lynne A.M."/>
            <person name="Johnson J.R."/>
            <person name="Nolan L.K."/>
        </authorList>
    </citation>
    <scope>NUCLEOTIDE SEQUENCE [LARGE SCALE GENOMIC DNA]</scope>
</reference>